<gene>
    <name evidence="1" type="primary">tmaR</name>
    <name type="ordered locus">HD_1377</name>
</gene>
<name>TMAR_HAEDU</name>
<sequence length="111" mass="13378">MVDTKKQSFQNMLDYVHLYRLKNKLHRETADNDRKIRDNQKRVLLLDNLTQYITDAMSIEEIRAIIAHMRDDYENRVDDYMIRNAELSKQRREIRQKMAAHKQAPTVKTTD</sequence>
<dbReference type="EMBL" id="AE017143">
    <property type="protein sequence ID" value="AAP96190.1"/>
    <property type="molecule type" value="Genomic_DNA"/>
</dbReference>
<dbReference type="RefSeq" id="WP_010945239.1">
    <property type="nucleotide sequence ID" value="NC_002940.2"/>
</dbReference>
<dbReference type="SMR" id="Q7VLP5"/>
<dbReference type="STRING" id="233412.HD_1377"/>
<dbReference type="KEGG" id="hdu:HD_1377"/>
<dbReference type="eggNOG" id="COG2926">
    <property type="taxonomic scope" value="Bacteria"/>
</dbReference>
<dbReference type="HOGENOM" id="CLU_153146_0_0_6"/>
<dbReference type="OrthoDB" id="90485at2"/>
<dbReference type="Proteomes" id="UP000001022">
    <property type="component" value="Chromosome"/>
</dbReference>
<dbReference type="GO" id="GO:0005829">
    <property type="term" value="C:cytosol"/>
    <property type="evidence" value="ECO:0007669"/>
    <property type="project" value="TreeGrafter"/>
</dbReference>
<dbReference type="HAMAP" id="MF_00683">
    <property type="entry name" value="Pole_loc_TmaR"/>
    <property type="match status" value="1"/>
</dbReference>
<dbReference type="InterPro" id="IPR007458">
    <property type="entry name" value="DUF496"/>
</dbReference>
<dbReference type="NCBIfam" id="NF003844">
    <property type="entry name" value="PRK05423.1"/>
    <property type="match status" value="1"/>
</dbReference>
<dbReference type="PANTHER" id="PTHR39591">
    <property type="entry name" value="UPF0265 PROTEIN YEEX"/>
    <property type="match status" value="1"/>
</dbReference>
<dbReference type="PANTHER" id="PTHR39591:SF1">
    <property type="entry name" value="UPF0265 PROTEIN YEEX"/>
    <property type="match status" value="1"/>
</dbReference>
<dbReference type="Pfam" id="PF04363">
    <property type="entry name" value="DUF496"/>
    <property type="match status" value="1"/>
</dbReference>
<dbReference type="PIRSF" id="PIRSF028773">
    <property type="entry name" value="UCP028773"/>
    <property type="match status" value="1"/>
</dbReference>
<protein>
    <recommendedName>
        <fullName evidence="1">Pole-localizer protein TmaR</fullName>
    </recommendedName>
</protein>
<comment type="function">
    <text evidence="1">Pole-localizer protein involved in the regulation of several cellular processes.</text>
</comment>
<comment type="subcellular location">
    <subcellularLocation>
        <location evidence="1">Cytoplasm</location>
    </subcellularLocation>
</comment>
<comment type="similarity">
    <text evidence="1">Belongs to the pole-localizer TmaR family.</text>
</comment>
<reference key="1">
    <citation type="submission" date="2003-06" db="EMBL/GenBank/DDBJ databases">
        <title>The complete genome sequence of Haemophilus ducreyi.</title>
        <authorList>
            <person name="Munson R.S. Jr."/>
            <person name="Ray W.C."/>
            <person name="Mahairas G."/>
            <person name="Sabo P."/>
            <person name="Mungur R."/>
            <person name="Johnson L."/>
            <person name="Nguyen D."/>
            <person name="Wang J."/>
            <person name="Forst C."/>
            <person name="Hood L."/>
        </authorList>
    </citation>
    <scope>NUCLEOTIDE SEQUENCE [LARGE SCALE GENOMIC DNA]</scope>
    <source>
        <strain>35000HP / ATCC 700724</strain>
    </source>
</reference>
<organism>
    <name type="scientific">Haemophilus ducreyi (strain 35000HP / ATCC 700724)</name>
    <dbReference type="NCBI Taxonomy" id="233412"/>
    <lineage>
        <taxon>Bacteria</taxon>
        <taxon>Pseudomonadati</taxon>
        <taxon>Pseudomonadota</taxon>
        <taxon>Gammaproteobacteria</taxon>
        <taxon>Pasteurellales</taxon>
        <taxon>Pasteurellaceae</taxon>
        <taxon>Haemophilus</taxon>
    </lineage>
</organism>
<keyword id="KW-0175">Coiled coil</keyword>
<keyword id="KW-0963">Cytoplasm</keyword>
<keyword id="KW-1185">Reference proteome</keyword>
<proteinExistence type="inferred from homology"/>
<feature type="chain" id="PRO_0000072763" description="Pole-localizer protein TmaR">
    <location>
        <begin position="1"/>
        <end position="111"/>
    </location>
</feature>
<feature type="coiled-coil region" evidence="1">
    <location>
        <begin position="70"/>
        <end position="104"/>
    </location>
</feature>
<accession>Q7VLP5</accession>
<evidence type="ECO:0000255" key="1">
    <source>
        <dbReference type="HAMAP-Rule" id="MF_00683"/>
    </source>
</evidence>